<evidence type="ECO:0000255" key="1">
    <source>
        <dbReference type="HAMAP-Rule" id="MF_00338"/>
    </source>
</evidence>
<protein>
    <recommendedName>
        <fullName evidence="1">UPF0145 protein MAB_3451c</fullName>
    </recommendedName>
</protein>
<comment type="similarity">
    <text evidence="1">Belongs to the UPF0145 family.</text>
</comment>
<gene>
    <name type="ordered locus">MAB_3451c</name>
</gene>
<reference key="1">
    <citation type="journal article" date="2009" name="PLoS ONE">
        <title>Non mycobacterial virulence genes in the genome of the emerging pathogen Mycobacterium abscessus.</title>
        <authorList>
            <person name="Ripoll F."/>
            <person name="Pasek S."/>
            <person name="Schenowitz C."/>
            <person name="Dossat C."/>
            <person name="Barbe V."/>
            <person name="Rottman M."/>
            <person name="Macheras E."/>
            <person name="Heym B."/>
            <person name="Herrmann J.L."/>
            <person name="Daffe M."/>
            <person name="Brosch R."/>
            <person name="Risler J.L."/>
            <person name="Gaillard J.L."/>
        </authorList>
    </citation>
    <scope>NUCLEOTIDE SEQUENCE [LARGE SCALE GENOMIC DNA]</scope>
    <source>
        <strain>ATCC 19977 / DSM 44196 / CCUG 20993 / CIP 104536 / JCM 13569 / NCTC 13031 / TMC 1543 / L948</strain>
    </source>
</reference>
<name>Y3451_MYCA9</name>
<sequence length="107" mass="11311">MIIVTSNDIPGYKIAAVFGEVFGLTVRSRHIGSNLAASFKSIAGGELKGITQLLHESRREALARLAAEAEARGANAVVAFRFETTEYANTGVEVCAYGTAVGIQPIQ</sequence>
<dbReference type="EMBL" id="CU458896">
    <property type="protein sequence ID" value="CAM63527.1"/>
    <property type="molecule type" value="Genomic_DNA"/>
</dbReference>
<dbReference type="RefSeq" id="WP_005056510.1">
    <property type="nucleotide sequence ID" value="NZ_MLCG01000001.1"/>
</dbReference>
<dbReference type="SMR" id="B1MES1"/>
<dbReference type="GeneID" id="93380389"/>
<dbReference type="KEGG" id="mab:MAB_3451c"/>
<dbReference type="Proteomes" id="UP000007137">
    <property type="component" value="Chromosome"/>
</dbReference>
<dbReference type="Gene3D" id="3.30.110.70">
    <property type="entry name" value="Hypothetical protein apc22750. Chain B"/>
    <property type="match status" value="1"/>
</dbReference>
<dbReference type="HAMAP" id="MF_00338">
    <property type="entry name" value="UPF0145"/>
    <property type="match status" value="1"/>
</dbReference>
<dbReference type="InterPro" id="IPR035439">
    <property type="entry name" value="UPF0145_dom_sf"/>
</dbReference>
<dbReference type="InterPro" id="IPR002765">
    <property type="entry name" value="UPF0145_YbjQ-like"/>
</dbReference>
<dbReference type="PANTHER" id="PTHR34068:SF2">
    <property type="entry name" value="UPF0145 PROTEIN SCO3412"/>
    <property type="match status" value="1"/>
</dbReference>
<dbReference type="PANTHER" id="PTHR34068">
    <property type="entry name" value="UPF0145 PROTEIN YBJQ"/>
    <property type="match status" value="1"/>
</dbReference>
<dbReference type="Pfam" id="PF01906">
    <property type="entry name" value="YbjQ_1"/>
    <property type="match status" value="1"/>
</dbReference>
<dbReference type="SUPFAM" id="SSF117782">
    <property type="entry name" value="YbjQ-like"/>
    <property type="match status" value="1"/>
</dbReference>
<organism>
    <name type="scientific">Mycobacteroides abscessus (strain ATCC 19977 / DSM 44196 / CCUG 20993 / CIP 104536 / JCM 13569 / NCTC 13031 / TMC 1543 / L948)</name>
    <name type="common">Mycobacterium abscessus</name>
    <dbReference type="NCBI Taxonomy" id="561007"/>
    <lineage>
        <taxon>Bacteria</taxon>
        <taxon>Bacillati</taxon>
        <taxon>Actinomycetota</taxon>
        <taxon>Actinomycetes</taxon>
        <taxon>Mycobacteriales</taxon>
        <taxon>Mycobacteriaceae</taxon>
        <taxon>Mycobacteroides</taxon>
        <taxon>Mycobacteroides abscessus</taxon>
    </lineage>
</organism>
<accession>B1MES1</accession>
<feature type="chain" id="PRO_1000120006" description="UPF0145 protein MAB_3451c">
    <location>
        <begin position="1"/>
        <end position="107"/>
    </location>
</feature>
<proteinExistence type="inferred from homology"/>
<keyword id="KW-1185">Reference proteome</keyword>